<organism>
    <name type="scientific">Shewanella baltica (strain OS155 / ATCC BAA-1091)</name>
    <dbReference type="NCBI Taxonomy" id="325240"/>
    <lineage>
        <taxon>Bacteria</taxon>
        <taxon>Pseudomonadati</taxon>
        <taxon>Pseudomonadota</taxon>
        <taxon>Gammaproteobacteria</taxon>
        <taxon>Alteromonadales</taxon>
        <taxon>Shewanellaceae</taxon>
        <taxon>Shewanella</taxon>
    </lineage>
</organism>
<keyword id="KW-0520">NAD</keyword>
<keyword id="KW-0560">Oxidoreductase</keyword>
<keyword id="KW-1185">Reference proteome</keyword>
<keyword id="KW-0816">Tricarboxylic acid cycle</keyword>
<evidence type="ECO:0000255" key="1">
    <source>
        <dbReference type="HAMAP-Rule" id="MF_01516"/>
    </source>
</evidence>
<reference key="1">
    <citation type="submission" date="2007-02" db="EMBL/GenBank/DDBJ databases">
        <title>Complete sequence of chromosome of Shewanella baltica OS155.</title>
        <authorList>
            <consortium name="US DOE Joint Genome Institute"/>
            <person name="Copeland A."/>
            <person name="Lucas S."/>
            <person name="Lapidus A."/>
            <person name="Barry K."/>
            <person name="Detter J.C."/>
            <person name="Glavina del Rio T."/>
            <person name="Hammon N."/>
            <person name="Israni S."/>
            <person name="Dalin E."/>
            <person name="Tice H."/>
            <person name="Pitluck S."/>
            <person name="Sims D.R."/>
            <person name="Brettin T."/>
            <person name="Bruce D."/>
            <person name="Han C."/>
            <person name="Tapia R."/>
            <person name="Brainard J."/>
            <person name="Schmutz J."/>
            <person name="Larimer F."/>
            <person name="Land M."/>
            <person name="Hauser L."/>
            <person name="Kyrpides N."/>
            <person name="Mikhailova N."/>
            <person name="Brettar I."/>
            <person name="Klappenbach J."/>
            <person name="Konstantinidis K."/>
            <person name="Rodrigues J."/>
            <person name="Tiedje J."/>
            <person name="Richardson P."/>
        </authorList>
    </citation>
    <scope>NUCLEOTIDE SEQUENCE [LARGE SCALE GENOMIC DNA]</scope>
    <source>
        <strain>OS155 / ATCC BAA-1091</strain>
    </source>
</reference>
<accession>A3D075</accession>
<gene>
    <name evidence="1" type="primary">mdh</name>
    <name type="ordered locus">Sbal_0609</name>
</gene>
<proteinExistence type="inferred from homology"/>
<feature type="chain" id="PRO_1000068592" description="Malate dehydrogenase">
    <location>
        <begin position="1"/>
        <end position="311"/>
    </location>
</feature>
<feature type="active site" description="Proton acceptor" evidence="1">
    <location>
        <position position="177"/>
    </location>
</feature>
<feature type="binding site" evidence="1">
    <location>
        <begin position="7"/>
        <end position="13"/>
    </location>
    <ligand>
        <name>NAD(+)</name>
        <dbReference type="ChEBI" id="CHEBI:57540"/>
    </ligand>
</feature>
<feature type="binding site" evidence="1">
    <location>
        <position position="34"/>
    </location>
    <ligand>
        <name>NAD(+)</name>
        <dbReference type="ChEBI" id="CHEBI:57540"/>
    </ligand>
</feature>
<feature type="binding site" evidence="1">
    <location>
        <position position="81"/>
    </location>
    <ligand>
        <name>substrate</name>
    </ligand>
</feature>
<feature type="binding site" evidence="1">
    <location>
        <position position="87"/>
    </location>
    <ligand>
        <name>substrate</name>
    </ligand>
</feature>
<feature type="binding site" evidence="1">
    <location>
        <position position="94"/>
    </location>
    <ligand>
        <name>NAD(+)</name>
        <dbReference type="ChEBI" id="CHEBI:57540"/>
    </ligand>
</feature>
<feature type="binding site" evidence="1">
    <location>
        <begin position="117"/>
        <end position="119"/>
    </location>
    <ligand>
        <name>NAD(+)</name>
        <dbReference type="ChEBI" id="CHEBI:57540"/>
    </ligand>
</feature>
<feature type="binding site" evidence="1">
    <location>
        <position position="119"/>
    </location>
    <ligand>
        <name>substrate</name>
    </ligand>
</feature>
<feature type="binding site" evidence="1">
    <location>
        <position position="153"/>
    </location>
    <ligand>
        <name>substrate</name>
    </ligand>
</feature>
<feature type="binding site" evidence="1">
    <location>
        <position position="227"/>
    </location>
    <ligand>
        <name>NAD(+)</name>
        <dbReference type="ChEBI" id="CHEBI:57540"/>
    </ligand>
</feature>
<name>MDH_SHEB5</name>
<protein>
    <recommendedName>
        <fullName evidence="1">Malate dehydrogenase</fullName>
        <ecNumber evidence="1">1.1.1.37</ecNumber>
    </recommendedName>
</protein>
<sequence>MKVAVLGAAGGIGQALALLLKTQLPAGSHLSLYDIAPVTPGVAVDLSHIPTAVEIKGFAGEDPTPALVGADVVLISAGVARKPGMDRSDLFNINAGIVRNLIEKVAATCPTALVGIITNPVNTTVAIAAEVMKKAGVYDKNRLFGITTLDVIRSETFIAELKGLNVADVKVNVIGGHSGVTILPLLSQVEGVTFTDEEVASLTTRIQNAGTEVVEAKAGGGSATLSMGQAACRFGLSLVRGLQGEANIVECAYVDGGSEHAEFFAQPVLLGKNGIEKVLPYGEVSAFEANARDSMLDTLKGDIKLGVDFVK</sequence>
<dbReference type="EC" id="1.1.1.37" evidence="1"/>
<dbReference type="EMBL" id="CP000563">
    <property type="protein sequence ID" value="ABN60138.1"/>
    <property type="molecule type" value="Genomic_DNA"/>
</dbReference>
<dbReference type="RefSeq" id="WP_011845758.1">
    <property type="nucleotide sequence ID" value="NC_009052.1"/>
</dbReference>
<dbReference type="SMR" id="A3D075"/>
<dbReference type="STRING" id="325240.Sbal_0609"/>
<dbReference type="KEGG" id="sbl:Sbal_0609"/>
<dbReference type="HOGENOM" id="CLU_047181_0_1_6"/>
<dbReference type="OrthoDB" id="9802969at2"/>
<dbReference type="Proteomes" id="UP000001557">
    <property type="component" value="Chromosome"/>
</dbReference>
<dbReference type="GO" id="GO:0005737">
    <property type="term" value="C:cytoplasm"/>
    <property type="evidence" value="ECO:0007669"/>
    <property type="project" value="TreeGrafter"/>
</dbReference>
<dbReference type="GO" id="GO:0030060">
    <property type="term" value="F:L-malate dehydrogenase (NAD+) activity"/>
    <property type="evidence" value="ECO:0007669"/>
    <property type="project" value="UniProtKB-UniRule"/>
</dbReference>
<dbReference type="GO" id="GO:0006108">
    <property type="term" value="P:malate metabolic process"/>
    <property type="evidence" value="ECO:0007669"/>
    <property type="project" value="InterPro"/>
</dbReference>
<dbReference type="GO" id="GO:0006099">
    <property type="term" value="P:tricarboxylic acid cycle"/>
    <property type="evidence" value="ECO:0007669"/>
    <property type="project" value="UniProtKB-UniRule"/>
</dbReference>
<dbReference type="CDD" id="cd01337">
    <property type="entry name" value="MDH_glyoxysomal_mitochondrial"/>
    <property type="match status" value="1"/>
</dbReference>
<dbReference type="FunFam" id="3.40.50.720:FF:000017">
    <property type="entry name" value="Malate dehydrogenase"/>
    <property type="match status" value="1"/>
</dbReference>
<dbReference type="FunFam" id="3.90.110.10:FF:000001">
    <property type="entry name" value="Malate dehydrogenase"/>
    <property type="match status" value="1"/>
</dbReference>
<dbReference type="Gene3D" id="3.90.110.10">
    <property type="entry name" value="Lactate dehydrogenase/glycoside hydrolase, family 4, C-terminal"/>
    <property type="match status" value="1"/>
</dbReference>
<dbReference type="Gene3D" id="3.40.50.720">
    <property type="entry name" value="NAD(P)-binding Rossmann-like Domain"/>
    <property type="match status" value="1"/>
</dbReference>
<dbReference type="HAMAP" id="MF_01516">
    <property type="entry name" value="Malate_dehydrog_1"/>
    <property type="match status" value="1"/>
</dbReference>
<dbReference type="InterPro" id="IPR001557">
    <property type="entry name" value="L-lactate/malate_DH"/>
</dbReference>
<dbReference type="InterPro" id="IPR022383">
    <property type="entry name" value="Lactate/malate_DH_C"/>
</dbReference>
<dbReference type="InterPro" id="IPR001236">
    <property type="entry name" value="Lactate/malate_DH_N"/>
</dbReference>
<dbReference type="InterPro" id="IPR015955">
    <property type="entry name" value="Lactate_DH/Glyco_Ohase_4_C"/>
</dbReference>
<dbReference type="InterPro" id="IPR001252">
    <property type="entry name" value="Malate_DH_AS"/>
</dbReference>
<dbReference type="InterPro" id="IPR010097">
    <property type="entry name" value="Malate_DH_type1"/>
</dbReference>
<dbReference type="InterPro" id="IPR023958">
    <property type="entry name" value="Malate_DH_type1_bac"/>
</dbReference>
<dbReference type="InterPro" id="IPR036291">
    <property type="entry name" value="NAD(P)-bd_dom_sf"/>
</dbReference>
<dbReference type="NCBIfam" id="TIGR01772">
    <property type="entry name" value="MDH_euk_gproteo"/>
    <property type="match status" value="1"/>
</dbReference>
<dbReference type="PANTHER" id="PTHR11540">
    <property type="entry name" value="MALATE AND LACTATE DEHYDROGENASE"/>
    <property type="match status" value="1"/>
</dbReference>
<dbReference type="PANTHER" id="PTHR11540:SF16">
    <property type="entry name" value="MALATE DEHYDROGENASE, MITOCHONDRIAL"/>
    <property type="match status" value="1"/>
</dbReference>
<dbReference type="Pfam" id="PF02866">
    <property type="entry name" value="Ldh_1_C"/>
    <property type="match status" value="1"/>
</dbReference>
<dbReference type="Pfam" id="PF00056">
    <property type="entry name" value="Ldh_1_N"/>
    <property type="match status" value="1"/>
</dbReference>
<dbReference type="PIRSF" id="PIRSF000102">
    <property type="entry name" value="Lac_mal_DH"/>
    <property type="match status" value="1"/>
</dbReference>
<dbReference type="SUPFAM" id="SSF56327">
    <property type="entry name" value="LDH C-terminal domain-like"/>
    <property type="match status" value="1"/>
</dbReference>
<dbReference type="SUPFAM" id="SSF51735">
    <property type="entry name" value="NAD(P)-binding Rossmann-fold domains"/>
    <property type="match status" value="1"/>
</dbReference>
<dbReference type="PROSITE" id="PS00068">
    <property type="entry name" value="MDH"/>
    <property type="match status" value="1"/>
</dbReference>
<comment type="function">
    <text evidence="1">Catalyzes the reversible oxidation of malate to oxaloacetate.</text>
</comment>
<comment type="catalytic activity">
    <reaction evidence="1">
        <text>(S)-malate + NAD(+) = oxaloacetate + NADH + H(+)</text>
        <dbReference type="Rhea" id="RHEA:21432"/>
        <dbReference type="ChEBI" id="CHEBI:15378"/>
        <dbReference type="ChEBI" id="CHEBI:15589"/>
        <dbReference type="ChEBI" id="CHEBI:16452"/>
        <dbReference type="ChEBI" id="CHEBI:57540"/>
        <dbReference type="ChEBI" id="CHEBI:57945"/>
        <dbReference type="EC" id="1.1.1.37"/>
    </reaction>
</comment>
<comment type="subunit">
    <text evidence="1">Homodimer.</text>
</comment>
<comment type="similarity">
    <text evidence="1">Belongs to the LDH/MDH superfamily. MDH type 1 family.</text>
</comment>